<accession>B5QZL6</accession>
<gene>
    <name evidence="1" type="primary">hisA</name>
    <name type="ordered locus">SEN2075</name>
</gene>
<protein>
    <recommendedName>
        <fullName evidence="1">1-(5-phosphoribosyl)-5-[(5-phosphoribosylamino)methylideneamino] imidazole-4-carboxamide isomerase</fullName>
        <ecNumber evidence="1">5.3.1.16</ecNumber>
    </recommendedName>
    <alternativeName>
        <fullName evidence="1">Phosphoribosylformimino-5-aminoimidazole carboxamide ribotide isomerase</fullName>
    </alternativeName>
</protein>
<dbReference type="EC" id="5.3.1.16" evidence="1"/>
<dbReference type="EMBL" id="AM933172">
    <property type="protein sequence ID" value="CAR33654.1"/>
    <property type="molecule type" value="Genomic_DNA"/>
</dbReference>
<dbReference type="RefSeq" id="WP_000586403.1">
    <property type="nucleotide sequence ID" value="NC_011294.1"/>
</dbReference>
<dbReference type="SMR" id="B5QZL6"/>
<dbReference type="KEGG" id="set:SEN2075"/>
<dbReference type="HOGENOM" id="CLU_048577_1_2_6"/>
<dbReference type="UniPathway" id="UPA00031">
    <property type="reaction ID" value="UER00009"/>
</dbReference>
<dbReference type="Proteomes" id="UP000000613">
    <property type="component" value="Chromosome"/>
</dbReference>
<dbReference type="GO" id="GO:0005737">
    <property type="term" value="C:cytoplasm"/>
    <property type="evidence" value="ECO:0007669"/>
    <property type="project" value="UniProtKB-SubCell"/>
</dbReference>
<dbReference type="GO" id="GO:0003949">
    <property type="term" value="F:1-(5-phosphoribosyl)-5-[(5-phosphoribosylamino)methylideneamino]imidazole-4-carboxamide isomerase activity"/>
    <property type="evidence" value="ECO:0007669"/>
    <property type="project" value="UniProtKB-UniRule"/>
</dbReference>
<dbReference type="GO" id="GO:0000105">
    <property type="term" value="P:L-histidine biosynthetic process"/>
    <property type="evidence" value="ECO:0007669"/>
    <property type="project" value="UniProtKB-UniRule"/>
</dbReference>
<dbReference type="GO" id="GO:0000162">
    <property type="term" value="P:L-tryptophan biosynthetic process"/>
    <property type="evidence" value="ECO:0007669"/>
    <property type="project" value="TreeGrafter"/>
</dbReference>
<dbReference type="CDD" id="cd04732">
    <property type="entry name" value="HisA"/>
    <property type="match status" value="1"/>
</dbReference>
<dbReference type="FunFam" id="3.20.20.70:FF:000009">
    <property type="entry name" value="1-(5-phosphoribosyl)-5-[(5-phosphoribosylamino)methylideneamino] imidazole-4-carboxamide isomerase"/>
    <property type="match status" value="1"/>
</dbReference>
<dbReference type="Gene3D" id="3.20.20.70">
    <property type="entry name" value="Aldolase class I"/>
    <property type="match status" value="1"/>
</dbReference>
<dbReference type="HAMAP" id="MF_01014">
    <property type="entry name" value="HisA"/>
    <property type="match status" value="1"/>
</dbReference>
<dbReference type="InterPro" id="IPR013785">
    <property type="entry name" value="Aldolase_TIM"/>
</dbReference>
<dbReference type="InterPro" id="IPR006062">
    <property type="entry name" value="His_biosynth"/>
</dbReference>
<dbReference type="InterPro" id="IPR006063">
    <property type="entry name" value="HisA_bact_arch"/>
</dbReference>
<dbReference type="InterPro" id="IPR044524">
    <property type="entry name" value="Isoase_HisA-like"/>
</dbReference>
<dbReference type="InterPro" id="IPR023016">
    <property type="entry name" value="Isoase_HisA-like_bact"/>
</dbReference>
<dbReference type="InterPro" id="IPR011060">
    <property type="entry name" value="RibuloseP-bd_barrel"/>
</dbReference>
<dbReference type="NCBIfam" id="TIGR00007">
    <property type="entry name" value="1-(5-phosphoribosyl)-5-[(5-phosphoribosylamino)methylideneamino]imidazole-4-carboxamide isomerase"/>
    <property type="match status" value="1"/>
</dbReference>
<dbReference type="PANTHER" id="PTHR43090">
    <property type="entry name" value="1-(5-PHOSPHORIBOSYL)-5-[(5-PHOSPHORIBOSYLAMINO)METHYLIDENEAMINO] IMIDAZOLE-4-CARBOXAMIDE ISOMERASE"/>
    <property type="match status" value="1"/>
</dbReference>
<dbReference type="PANTHER" id="PTHR43090:SF2">
    <property type="entry name" value="1-(5-PHOSPHORIBOSYL)-5-[(5-PHOSPHORIBOSYLAMINO)METHYLIDENEAMINO] IMIDAZOLE-4-CARBOXAMIDE ISOMERASE"/>
    <property type="match status" value="1"/>
</dbReference>
<dbReference type="Pfam" id="PF00977">
    <property type="entry name" value="His_biosynth"/>
    <property type="match status" value="1"/>
</dbReference>
<dbReference type="SUPFAM" id="SSF51366">
    <property type="entry name" value="Ribulose-phoshate binding barrel"/>
    <property type="match status" value="1"/>
</dbReference>
<reference key="1">
    <citation type="journal article" date="2008" name="Genome Res.">
        <title>Comparative genome analysis of Salmonella enteritidis PT4 and Salmonella gallinarum 287/91 provides insights into evolutionary and host adaptation pathways.</title>
        <authorList>
            <person name="Thomson N.R."/>
            <person name="Clayton D.J."/>
            <person name="Windhorst D."/>
            <person name="Vernikos G."/>
            <person name="Davidson S."/>
            <person name="Churcher C."/>
            <person name="Quail M.A."/>
            <person name="Stevens M."/>
            <person name="Jones M.A."/>
            <person name="Watson M."/>
            <person name="Barron A."/>
            <person name="Layton A."/>
            <person name="Pickard D."/>
            <person name="Kingsley R.A."/>
            <person name="Bignell A."/>
            <person name="Clark L."/>
            <person name="Harris B."/>
            <person name="Ormond D."/>
            <person name="Abdellah Z."/>
            <person name="Brooks K."/>
            <person name="Cherevach I."/>
            <person name="Chillingworth T."/>
            <person name="Woodward J."/>
            <person name="Norberczak H."/>
            <person name="Lord A."/>
            <person name="Arrowsmith C."/>
            <person name="Jagels K."/>
            <person name="Moule S."/>
            <person name="Mungall K."/>
            <person name="Saunders M."/>
            <person name="Whitehead S."/>
            <person name="Chabalgoity J.A."/>
            <person name="Maskell D."/>
            <person name="Humphreys T."/>
            <person name="Roberts M."/>
            <person name="Barrow P.A."/>
            <person name="Dougan G."/>
            <person name="Parkhill J."/>
        </authorList>
    </citation>
    <scope>NUCLEOTIDE SEQUENCE [LARGE SCALE GENOMIC DNA]</scope>
    <source>
        <strain>P125109</strain>
    </source>
</reference>
<keyword id="KW-0028">Amino-acid biosynthesis</keyword>
<keyword id="KW-0963">Cytoplasm</keyword>
<keyword id="KW-0368">Histidine biosynthesis</keyword>
<keyword id="KW-0413">Isomerase</keyword>
<comment type="catalytic activity">
    <reaction evidence="1">
        <text>1-(5-phospho-beta-D-ribosyl)-5-[(5-phospho-beta-D-ribosylamino)methylideneamino]imidazole-4-carboxamide = 5-[(5-phospho-1-deoxy-D-ribulos-1-ylimino)methylamino]-1-(5-phospho-beta-D-ribosyl)imidazole-4-carboxamide</text>
        <dbReference type="Rhea" id="RHEA:15469"/>
        <dbReference type="ChEBI" id="CHEBI:58435"/>
        <dbReference type="ChEBI" id="CHEBI:58525"/>
        <dbReference type="EC" id="5.3.1.16"/>
    </reaction>
</comment>
<comment type="pathway">
    <text evidence="1">Amino-acid biosynthesis; L-histidine biosynthesis; L-histidine from 5-phospho-alpha-D-ribose 1-diphosphate: step 4/9.</text>
</comment>
<comment type="subcellular location">
    <subcellularLocation>
        <location evidence="1">Cytoplasm</location>
    </subcellularLocation>
</comment>
<comment type="similarity">
    <text evidence="1">Belongs to the HisA/HisF family.</text>
</comment>
<name>HIS4_SALEP</name>
<sequence length="245" mass="26116">MIIPALDLIDGTVVRLHQGDYARQRDYGNDPLPRLQDYAAQGAGVLHLVDLTGAKDPAKRQIPLIKTLVAGVNVPVQVGGGVRTEEDVAALLKAGVARVVIGSTAVKSPDVVKGWFERFGAQALVLALDVRIDEHGNKQVAVSGWQENSGVSLEQLVETYLPVGLKHVLCTDISRDGTLAGSNVSLYEEICARYPQIAFQSSGGIGDIDDIAALRGTGVRGVIVGRALLEGKFTVKEAIQCWQNV</sequence>
<organism>
    <name type="scientific">Salmonella enteritidis PT4 (strain P125109)</name>
    <dbReference type="NCBI Taxonomy" id="550537"/>
    <lineage>
        <taxon>Bacteria</taxon>
        <taxon>Pseudomonadati</taxon>
        <taxon>Pseudomonadota</taxon>
        <taxon>Gammaproteobacteria</taxon>
        <taxon>Enterobacterales</taxon>
        <taxon>Enterobacteriaceae</taxon>
        <taxon>Salmonella</taxon>
    </lineage>
</organism>
<evidence type="ECO:0000255" key="1">
    <source>
        <dbReference type="HAMAP-Rule" id="MF_01014"/>
    </source>
</evidence>
<proteinExistence type="inferred from homology"/>
<feature type="chain" id="PRO_1000190551" description="1-(5-phosphoribosyl)-5-[(5-phosphoribosylamino)methylideneamino] imidazole-4-carboxamide isomerase">
    <location>
        <begin position="1"/>
        <end position="245"/>
    </location>
</feature>
<feature type="active site" description="Proton acceptor" evidence="1">
    <location>
        <position position="7"/>
    </location>
</feature>
<feature type="active site" description="Proton donor" evidence="1">
    <location>
        <position position="129"/>
    </location>
</feature>